<protein>
    <recommendedName>
        <fullName evidence="1">Alanine racemase</fullName>
        <ecNumber evidence="1">5.1.1.1</ecNumber>
    </recommendedName>
</protein>
<comment type="function">
    <text evidence="1">Catalyzes the interconversion of L-alanine and D-alanine. May also act on other amino acids.</text>
</comment>
<comment type="catalytic activity">
    <reaction evidence="1">
        <text>L-alanine = D-alanine</text>
        <dbReference type="Rhea" id="RHEA:20249"/>
        <dbReference type="ChEBI" id="CHEBI:57416"/>
        <dbReference type="ChEBI" id="CHEBI:57972"/>
        <dbReference type="EC" id="5.1.1.1"/>
    </reaction>
</comment>
<comment type="cofactor">
    <cofactor evidence="1">
        <name>pyridoxal 5'-phosphate</name>
        <dbReference type="ChEBI" id="CHEBI:597326"/>
    </cofactor>
</comment>
<comment type="pathway">
    <text evidence="1">Amino-acid biosynthesis; D-alanine biosynthesis; D-alanine from L-alanine: step 1/1.</text>
</comment>
<comment type="similarity">
    <text evidence="1">Belongs to the alanine racemase family.</text>
</comment>
<accession>Q221R3</accession>
<name>ALR_ALBFT</name>
<evidence type="ECO:0000255" key="1">
    <source>
        <dbReference type="HAMAP-Rule" id="MF_01201"/>
    </source>
</evidence>
<dbReference type="EC" id="5.1.1.1" evidence="1"/>
<dbReference type="EMBL" id="CP000267">
    <property type="protein sequence ID" value="ABD68240.1"/>
    <property type="molecule type" value="Genomic_DNA"/>
</dbReference>
<dbReference type="RefSeq" id="WP_011462813.1">
    <property type="nucleotide sequence ID" value="NC_007908.1"/>
</dbReference>
<dbReference type="SMR" id="Q221R3"/>
<dbReference type="STRING" id="338969.Rfer_0488"/>
<dbReference type="KEGG" id="rfr:Rfer_0488"/>
<dbReference type="eggNOG" id="COG0787">
    <property type="taxonomic scope" value="Bacteria"/>
</dbReference>
<dbReference type="HOGENOM" id="CLU_028393_1_0_4"/>
<dbReference type="OrthoDB" id="9813814at2"/>
<dbReference type="UniPathway" id="UPA00042">
    <property type="reaction ID" value="UER00497"/>
</dbReference>
<dbReference type="Proteomes" id="UP000008332">
    <property type="component" value="Chromosome"/>
</dbReference>
<dbReference type="GO" id="GO:0005829">
    <property type="term" value="C:cytosol"/>
    <property type="evidence" value="ECO:0007669"/>
    <property type="project" value="TreeGrafter"/>
</dbReference>
<dbReference type="GO" id="GO:0008784">
    <property type="term" value="F:alanine racemase activity"/>
    <property type="evidence" value="ECO:0007669"/>
    <property type="project" value="UniProtKB-UniRule"/>
</dbReference>
<dbReference type="GO" id="GO:0030170">
    <property type="term" value="F:pyridoxal phosphate binding"/>
    <property type="evidence" value="ECO:0007669"/>
    <property type="project" value="UniProtKB-UniRule"/>
</dbReference>
<dbReference type="GO" id="GO:0030632">
    <property type="term" value="P:D-alanine biosynthetic process"/>
    <property type="evidence" value="ECO:0007669"/>
    <property type="project" value="UniProtKB-UniRule"/>
</dbReference>
<dbReference type="CDD" id="cd06827">
    <property type="entry name" value="PLPDE_III_AR_proteobact"/>
    <property type="match status" value="1"/>
</dbReference>
<dbReference type="FunFam" id="3.20.20.10:FF:000002">
    <property type="entry name" value="Alanine racemase"/>
    <property type="match status" value="1"/>
</dbReference>
<dbReference type="Gene3D" id="3.20.20.10">
    <property type="entry name" value="Alanine racemase"/>
    <property type="match status" value="1"/>
</dbReference>
<dbReference type="Gene3D" id="2.40.37.10">
    <property type="entry name" value="Lyase, Ornithine Decarboxylase, Chain A, domain 1"/>
    <property type="match status" value="1"/>
</dbReference>
<dbReference type="HAMAP" id="MF_01201">
    <property type="entry name" value="Ala_racemase"/>
    <property type="match status" value="1"/>
</dbReference>
<dbReference type="InterPro" id="IPR000821">
    <property type="entry name" value="Ala_racemase"/>
</dbReference>
<dbReference type="InterPro" id="IPR009006">
    <property type="entry name" value="Ala_racemase/Decarboxylase_C"/>
</dbReference>
<dbReference type="InterPro" id="IPR011079">
    <property type="entry name" value="Ala_racemase_C"/>
</dbReference>
<dbReference type="InterPro" id="IPR001608">
    <property type="entry name" value="Ala_racemase_N"/>
</dbReference>
<dbReference type="InterPro" id="IPR020622">
    <property type="entry name" value="Ala_racemase_pyridoxalP-BS"/>
</dbReference>
<dbReference type="InterPro" id="IPR029066">
    <property type="entry name" value="PLP-binding_barrel"/>
</dbReference>
<dbReference type="NCBIfam" id="TIGR00492">
    <property type="entry name" value="alr"/>
    <property type="match status" value="1"/>
</dbReference>
<dbReference type="PANTHER" id="PTHR30511">
    <property type="entry name" value="ALANINE RACEMASE"/>
    <property type="match status" value="1"/>
</dbReference>
<dbReference type="PANTHER" id="PTHR30511:SF0">
    <property type="entry name" value="ALANINE RACEMASE, CATABOLIC-RELATED"/>
    <property type="match status" value="1"/>
</dbReference>
<dbReference type="Pfam" id="PF00842">
    <property type="entry name" value="Ala_racemase_C"/>
    <property type="match status" value="1"/>
</dbReference>
<dbReference type="Pfam" id="PF01168">
    <property type="entry name" value="Ala_racemase_N"/>
    <property type="match status" value="1"/>
</dbReference>
<dbReference type="PRINTS" id="PR00992">
    <property type="entry name" value="ALARACEMASE"/>
</dbReference>
<dbReference type="SMART" id="SM01005">
    <property type="entry name" value="Ala_racemase_C"/>
    <property type="match status" value="1"/>
</dbReference>
<dbReference type="SUPFAM" id="SSF50621">
    <property type="entry name" value="Alanine racemase C-terminal domain-like"/>
    <property type="match status" value="1"/>
</dbReference>
<dbReference type="SUPFAM" id="SSF51419">
    <property type="entry name" value="PLP-binding barrel"/>
    <property type="match status" value="1"/>
</dbReference>
<dbReference type="PROSITE" id="PS00395">
    <property type="entry name" value="ALANINE_RACEMASE"/>
    <property type="match status" value="1"/>
</dbReference>
<organism>
    <name type="scientific">Albidiferax ferrireducens (strain ATCC BAA-621 / DSM 15236 / T118)</name>
    <name type="common">Rhodoferax ferrireducens</name>
    <dbReference type="NCBI Taxonomy" id="338969"/>
    <lineage>
        <taxon>Bacteria</taxon>
        <taxon>Pseudomonadati</taxon>
        <taxon>Pseudomonadota</taxon>
        <taxon>Betaproteobacteria</taxon>
        <taxon>Burkholderiales</taxon>
        <taxon>Comamonadaceae</taxon>
        <taxon>Rhodoferax</taxon>
    </lineage>
</organism>
<reference key="1">
    <citation type="submission" date="2006-02" db="EMBL/GenBank/DDBJ databases">
        <title>Complete sequence of chromosome of Rhodoferax ferrireducens DSM 15236.</title>
        <authorList>
            <person name="Copeland A."/>
            <person name="Lucas S."/>
            <person name="Lapidus A."/>
            <person name="Barry K."/>
            <person name="Detter J.C."/>
            <person name="Glavina del Rio T."/>
            <person name="Hammon N."/>
            <person name="Israni S."/>
            <person name="Pitluck S."/>
            <person name="Brettin T."/>
            <person name="Bruce D."/>
            <person name="Han C."/>
            <person name="Tapia R."/>
            <person name="Gilna P."/>
            <person name="Kiss H."/>
            <person name="Schmutz J."/>
            <person name="Larimer F."/>
            <person name="Land M."/>
            <person name="Kyrpides N."/>
            <person name="Ivanova N."/>
            <person name="Richardson P."/>
        </authorList>
    </citation>
    <scope>NUCLEOTIDE SEQUENCE [LARGE SCALE GENOMIC DNA]</scope>
    <source>
        <strain>ATCC BAA-621 / DSM 15236 / T118</strain>
    </source>
</reference>
<gene>
    <name type="primary">alr</name>
    <name type="ordered locus">Rfer_0488</name>
</gene>
<sequence length="374" mass="40081">MPRPIQATIHTAALRHNLARARLAAPDAKVWAIVKANAYGHGIERVFEGLRAADGFALLDLDEAQRVRALGWRGPILLLEGVFELRDLELCSRLDLWHTVHCDEQIDMLASHKTKVAQRVFLKMNSGMNRLGFTPQRYRAAWTRLNALPQVDEISLITHFSDADGARGITEQMAVFAEVTRDLPGERTLSNSAATLLHTPARQPGDGFVASDWVRPGIAIYGSAPDFPQHSATDWGLQPSMTLTAKIIATQTVDTGASVGYGSTFVADKPIQVGVVACGYADGYPRLCPTGTPVLVNGIRTRTVGRVSMDMLAVDLSAVTAAGGQVGIGSEVTLWGRAANGLVLGIDEVAQPAGTVGYELMCALAPRVPVLVAD</sequence>
<keyword id="KW-0413">Isomerase</keyword>
<keyword id="KW-0663">Pyridoxal phosphate</keyword>
<keyword id="KW-1185">Reference proteome</keyword>
<feature type="chain" id="PRO_1000066033" description="Alanine racemase">
    <location>
        <begin position="1"/>
        <end position="374"/>
    </location>
</feature>
<feature type="active site" description="Proton acceptor; specific for D-alanine" evidence="1">
    <location>
        <position position="35"/>
    </location>
</feature>
<feature type="active site" description="Proton acceptor; specific for L-alanine" evidence="1">
    <location>
        <position position="261"/>
    </location>
</feature>
<feature type="binding site" evidence="1">
    <location>
        <position position="130"/>
    </location>
    <ligand>
        <name>substrate</name>
    </ligand>
</feature>
<feature type="binding site" evidence="1">
    <location>
        <position position="309"/>
    </location>
    <ligand>
        <name>substrate</name>
    </ligand>
</feature>
<feature type="modified residue" description="N6-(pyridoxal phosphate)lysine" evidence="1">
    <location>
        <position position="35"/>
    </location>
</feature>
<proteinExistence type="inferred from homology"/>